<organism>
    <name type="scientific">Escherichia coli O139:H28 (strain E24377A / ETEC)</name>
    <dbReference type="NCBI Taxonomy" id="331111"/>
    <lineage>
        <taxon>Bacteria</taxon>
        <taxon>Pseudomonadati</taxon>
        <taxon>Pseudomonadota</taxon>
        <taxon>Gammaproteobacteria</taxon>
        <taxon>Enterobacterales</taxon>
        <taxon>Enterobacteriaceae</taxon>
        <taxon>Escherichia</taxon>
    </lineage>
</organism>
<comment type="catalytic activity">
    <reaction evidence="1">
        <text>(S)-4-amino-5-oxopentanoate = 5-aminolevulinate</text>
        <dbReference type="Rhea" id="RHEA:14265"/>
        <dbReference type="ChEBI" id="CHEBI:57501"/>
        <dbReference type="ChEBI" id="CHEBI:356416"/>
        <dbReference type="EC" id="5.4.3.8"/>
    </reaction>
</comment>
<comment type="cofactor">
    <cofactor evidence="1">
        <name>pyridoxal 5'-phosphate</name>
        <dbReference type="ChEBI" id="CHEBI:597326"/>
    </cofactor>
</comment>
<comment type="pathway">
    <text evidence="1">Porphyrin-containing compound metabolism; protoporphyrin-IX biosynthesis; 5-aminolevulinate from L-glutamyl-tRNA(Glu): step 2/2.</text>
</comment>
<comment type="subunit">
    <text evidence="1">Homodimer.</text>
</comment>
<comment type="subcellular location">
    <subcellularLocation>
        <location evidence="1">Cytoplasm</location>
    </subcellularLocation>
</comment>
<comment type="similarity">
    <text evidence="1">Belongs to the class-III pyridoxal-phosphate-dependent aminotransferase family. HemL subfamily.</text>
</comment>
<keyword id="KW-0963">Cytoplasm</keyword>
<keyword id="KW-0413">Isomerase</keyword>
<keyword id="KW-0627">Porphyrin biosynthesis</keyword>
<keyword id="KW-0663">Pyridoxal phosphate</keyword>
<keyword id="KW-1185">Reference proteome</keyword>
<sequence>MSKSENLYSAARELIPGGVNSPVRAFTGVGGTPLFIEKADGAYLYDVDGKAYIDYVGSWGPMVLGHNHPAIRNAVIEAAERGLSFGAPTEMEVKMAQLVTELVPTMDMVRMVNSGTEATMSAIRLARGFTGRDKIIKFEGCYHGHADCLLVKAGSGALTLGQPNSPGVPADFAKHTLTCTYNDLASVRAAFEQYPQEIACIIVEPVAGNMNCVPPLPEFLPGLRALCDEFGALLIIDEVMTGFRVALAGAQDYYGVEPDLTCLGKIIGGGMPVGAFGGRRDVMDALAPTGPVYQAGTLSGNPIAMAAGFACLNEVAQPGVHETLDELTSRLAEGLLEAAEEAGIPLVVNHVGGMFGIFFTDAESVTCYQDVMACDVERFKRFFHMMLDEGVYLAPSAFEAGFMSVAHSMEDINNTIDAARRVFAKL</sequence>
<protein>
    <recommendedName>
        <fullName evidence="1">Glutamate-1-semialdehyde 2,1-aminomutase</fullName>
        <shortName evidence="1">GSA</shortName>
        <ecNumber evidence="1">5.4.3.8</ecNumber>
    </recommendedName>
    <alternativeName>
        <fullName evidence="1">Glutamate-1-semialdehyde aminotransferase</fullName>
        <shortName evidence="1">GSA-AT</shortName>
    </alternativeName>
</protein>
<feature type="chain" id="PRO_1000059985" description="Glutamate-1-semialdehyde 2,1-aminomutase">
    <location>
        <begin position="1"/>
        <end position="426"/>
    </location>
</feature>
<feature type="modified residue" description="N6-(pyridoxal phosphate)lysine" evidence="1">
    <location>
        <position position="265"/>
    </location>
</feature>
<accession>A7ZHP6</accession>
<gene>
    <name evidence="1" type="primary">hemL</name>
    <name type="ordered locus">EcE24377A_0159</name>
</gene>
<name>GSA_ECO24</name>
<reference key="1">
    <citation type="journal article" date="2008" name="J. Bacteriol.">
        <title>The pangenome structure of Escherichia coli: comparative genomic analysis of E. coli commensal and pathogenic isolates.</title>
        <authorList>
            <person name="Rasko D.A."/>
            <person name="Rosovitz M.J."/>
            <person name="Myers G.S.A."/>
            <person name="Mongodin E.F."/>
            <person name="Fricke W.F."/>
            <person name="Gajer P."/>
            <person name="Crabtree J."/>
            <person name="Sebaihia M."/>
            <person name="Thomson N.R."/>
            <person name="Chaudhuri R."/>
            <person name="Henderson I.R."/>
            <person name="Sperandio V."/>
            <person name="Ravel J."/>
        </authorList>
    </citation>
    <scope>NUCLEOTIDE SEQUENCE [LARGE SCALE GENOMIC DNA]</scope>
    <source>
        <strain>E24377A / ETEC</strain>
    </source>
</reference>
<proteinExistence type="inferred from homology"/>
<evidence type="ECO:0000255" key="1">
    <source>
        <dbReference type="HAMAP-Rule" id="MF_00375"/>
    </source>
</evidence>
<dbReference type="EC" id="5.4.3.8" evidence="1"/>
<dbReference type="EMBL" id="CP000800">
    <property type="protein sequence ID" value="ABV16915.1"/>
    <property type="molecule type" value="Genomic_DNA"/>
</dbReference>
<dbReference type="RefSeq" id="WP_000045290.1">
    <property type="nucleotide sequence ID" value="NC_009801.1"/>
</dbReference>
<dbReference type="SMR" id="A7ZHP6"/>
<dbReference type="KEGG" id="ecw:EcE24377A_0159"/>
<dbReference type="HOGENOM" id="CLU_016922_1_5_6"/>
<dbReference type="UniPathway" id="UPA00251">
    <property type="reaction ID" value="UER00317"/>
</dbReference>
<dbReference type="Proteomes" id="UP000001122">
    <property type="component" value="Chromosome"/>
</dbReference>
<dbReference type="GO" id="GO:0005737">
    <property type="term" value="C:cytoplasm"/>
    <property type="evidence" value="ECO:0007669"/>
    <property type="project" value="UniProtKB-SubCell"/>
</dbReference>
<dbReference type="GO" id="GO:0042286">
    <property type="term" value="F:glutamate-1-semialdehyde 2,1-aminomutase activity"/>
    <property type="evidence" value="ECO:0007669"/>
    <property type="project" value="UniProtKB-UniRule"/>
</dbReference>
<dbReference type="GO" id="GO:0030170">
    <property type="term" value="F:pyridoxal phosphate binding"/>
    <property type="evidence" value="ECO:0007669"/>
    <property type="project" value="InterPro"/>
</dbReference>
<dbReference type="GO" id="GO:0008483">
    <property type="term" value="F:transaminase activity"/>
    <property type="evidence" value="ECO:0007669"/>
    <property type="project" value="InterPro"/>
</dbReference>
<dbReference type="GO" id="GO:0006782">
    <property type="term" value="P:protoporphyrinogen IX biosynthetic process"/>
    <property type="evidence" value="ECO:0007669"/>
    <property type="project" value="UniProtKB-UniRule"/>
</dbReference>
<dbReference type="CDD" id="cd00610">
    <property type="entry name" value="OAT_like"/>
    <property type="match status" value="1"/>
</dbReference>
<dbReference type="FunFam" id="3.40.640.10:FF:000021">
    <property type="entry name" value="Glutamate-1-semialdehyde 2,1-aminomutase"/>
    <property type="match status" value="1"/>
</dbReference>
<dbReference type="FunFam" id="3.90.1150.10:FF:000012">
    <property type="entry name" value="Glutamate-1-semialdehyde 2,1-aminomutase"/>
    <property type="match status" value="1"/>
</dbReference>
<dbReference type="Gene3D" id="3.90.1150.10">
    <property type="entry name" value="Aspartate Aminotransferase, domain 1"/>
    <property type="match status" value="1"/>
</dbReference>
<dbReference type="Gene3D" id="3.40.640.10">
    <property type="entry name" value="Type I PLP-dependent aspartate aminotransferase-like (Major domain)"/>
    <property type="match status" value="1"/>
</dbReference>
<dbReference type="HAMAP" id="MF_00375">
    <property type="entry name" value="HemL_aminotrans_3"/>
    <property type="match status" value="1"/>
</dbReference>
<dbReference type="InterPro" id="IPR004639">
    <property type="entry name" value="4pyrrol_synth_GluAld_NH2Trfase"/>
</dbReference>
<dbReference type="InterPro" id="IPR005814">
    <property type="entry name" value="Aminotrans_3"/>
</dbReference>
<dbReference type="InterPro" id="IPR049704">
    <property type="entry name" value="Aminotrans_3_PPA_site"/>
</dbReference>
<dbReference type="InterPro" id="IPR015424">
    <property type="entry name" value="PyrdxlP-dep_Trfase"/>
</dbReference>
<dbReference type="InterPro" id="IPR015421">
    <property type="entry name" value="PyrdxlP-dep_Trfase_major"/>
</dbReference>
<dbReference type="InterPro" id="IPR015422">
    <property type="entry name" value="PyrdxlP-dep_Trfase_small"/>
</dbReference>
<dbReference type="NCBIfam" id="TIGR00713">
    <property type="entry name" value="hemL"/>
    <property type="match status" value="1"/>
</dbReference>
<dbReference type="NCBIfam" id="NF000818">
    <property type="entry name" value="PRK00062.1"/>
    <property type="match status" value="1"/>
</dbReference>
<dbReference type="PANTHER" id="PTHR43713">
    <property type="entry name" value="GLUTAMATE-1-SEMIALDEHYDE 2,1-AMINOMUTASE"/>
    <property type="match status" value="1"/>
</dbReference>
<dbReference type="PANTHER" id="PTHR43713:SF3">
    <property type="entry name" value="GLUTAMATE-1-SEMIALDEHYDE 2,1-AMINOMUTASE 1, CHLOROPLASTIC-RELATED"/>
    <property type="match status" value="1"/>
</dbReference>
<dbReference type="Pfam" id="PF00202">
    <property type="entry name" value="Aminotran_3"/>
    <property type="match status" value="1"/>
</dbReference>
<dbReference type="SUPFAM" id="SSF53383">
    <property type="entry name" value="PLP-dependent transferases"/>
    <property type="match status" value="1"/>
</dbReference>
<dbReference type="PROSITE" id="PS00600">
    <property type="entry name" value="AA_TRANSFER_CLASS_3"/>
    <property type="match status" value="1"/>
</dbReference>